<organism>
    <name type="scientific">Halalkalibacterium halodurans (strain ATCC BAA-125 / DSM 18197 / FERM 7344 / JCM 9153 / C-125)</name>
    <name type="common">Bacillus halodurans</name>
    <dbReference type="NCBI Taxonomy" id="272558"/>
    <lineage>
        <taxon>Bacteria</taxon>
        <taxon>Bacillati</taxon>
        <taxon>Bacillota</taxon>
        <taxon>Bacilli</taxon>
        <taxon>Bacillales</taxon>
        <taxon>Bacillaceae</taxon>
        <taxon>Halalkalibacterium (ex Joshi et al. 2022)</taxon>
    </lineage>
</organism>
<name>Y227_HALH5</name>
<sequence length="250" mass="27589">MITSYFNKIEEILQIVLQKEENLLKQAAEKVAESIQNGGIIQLFGCGHSHLLTEEVFYRAGGLVPIKPILVEPLMLHEGAVRSSKLERQNDYADWFLQDQDLQANDVLIVLSTSGRNPVPVDVAAYGKEKGAFVIGVTSLEYSKSQPSRHKSGKHLYNSVDLVINNHSVKGDAVLSYEKVQVPFAPTSTVVGATILNSMFAEAIKRMADNGYEPPIFLSGNIDGADDHNQLLIERYQKRIPLLALDGDEA</sequence>
<protein>
    <recommendedName>
        <fullName evidence="1">UPF0309 protein BH0227</fullName>
    </recommendedName>
</protein>
<accession>Q9KG85</accession>
<gene>
    <name type="ordered locus">BH0227</name>
</gene>
<proteinExistence type="inferred from homology"/>
<dbReference type="EMBL" id="BA000004">
    <property type="protein sequence ID" value="BAB03946.1"/>
    <property type="molecule type" value="Genomic_DNA"/>
</dbReference>
<dbReference type="PIR" id="C83678">
    <property type="entry name" value="C83678"/>
</dbReference>
<dbReference type="RefSeq" id="WP_010896409.1">
    <property type="nucleotide sequence ID" value="NC_002570.2"/>
</dbReference>
<dbReference type="SMR" id="Q9KG85"/>
<dbReference type="STRING" id="272558.gene:10726067"/>
<dbReference type="KEGG" id="bha:BH0227"/>
<dbReference type="eggNOG" id="COG4821">
    <property type="taxonomic scope" value="Bacteria"/>
</dbReference>
<dbReference type="HOGENOM" id="CLU_089975_0_0_9"/>
<dbReference type="OrthoDB" id="9805185at2"/>
<dbReference type="Proteomes" id="UP000001258">
    <property type="component" value="Chromosome"/>
</dbReference>
<dbReference type="GO" id="GO:0097367">
    <property type="term" value="F:carbohydrate derivative binding"/>
    <property type="evidence" value="ECO:0007669"/>
    <property type="project" value="InterPro"/>
</dbReference>
<dbReference type="GO" id="GO:1901135">
    <property type="term" value="P:carbohydrate derivative metabolic process"/>
    <property type="evidence" value="ECO:0007669"/>
    <property type="project" value="InterPro"/>
</dbReference>
<dbReference type="CDD" id="cd05013">
    <property type="entry name" value="SIS_RpiR"/>
    <property type="match status" value="1"/>
</dbReference>
<dbReference type="Gene3D" id="3.40.50.10490">
    <property type="entry name" value="Glucose-6-phosphate isomerase like protein, domain 1"/>
    <property type="match status" value="1"/>
</dbReference>
<dbReference type="HAMAP" id="MF_01240">
    <property type="entry name" value="UPF0309"/>
    <property type="match status" value="1"/>
</dbReference>
<dbReference type="InterPro" id="IPR035472">
    <property type="entry name" value="RpiR-like_SIS"/>
</dbReference>
<dbReference type="InterPro" id="IPR001347">
    <property type="entry name" value="SIS_dom"/>
</dbReference>
<dbReference type="InterPro" id="IPR046348">
    <property type="entry name" value="SIS_dom_sf"/>
</dbReference>
<dbReference type="InterPro" id="IPR050099">
    <property type="entry name" value="SIS_GmhA/DiaA_subfam"/>
</dbReference>
<dbReference type="InterPro" id="IPR022951">
    <property type="entry name" value="UPF0309"/>
</dbReference>
<dbReference type="NCBIfam" id="NF002805">
    <property type="entry name" value="PRK02947.1"/>
    <property type="match status" value="1"/>
</dbReference>
<dbReference type="PANTHER" id="PTHR30390:SF7">
    <property type="entry name" value="PHOSPHOHEPTOSE ISOMERASE"/>
    <property type="match status" value="1"/>
</dbReference>
<dbReference type="PANTHER" id="PTHR30390">
    <property type="entry name" value="SEDOHEPTULOSE 7-PHOSPHATE ISOMERASE / DNAA INITIATOR-ASSOCIATING FACTOR FOR REPLICATION INITIATION"/>
    <property type="match status" value="1"/>
</dbReference>
<dbReference type="Pfam" id="PF13580">
    <property type="entry name" value="SIS_2"/>
    <property type="match status" value="1"/>
</dbReference>
<dbReference type="SUPFAM" id="SSF53697">
    <property type="entry name" value="SIS domain"/>
    <property type="match status" value="1"/>
</dbReference>
<dbReference type="PROSITE" id="PS51464">
    <property type="entry name" value="SIS"/>
    <property type="match status" value="1"/>
</dbReference>
<comment type="similarity">
    <text evidence="1">Belongs to the UPF0309 family.</text>
</comment>
<keyword id="KW-1185">Reference proteome</keyword>
<feature type="chain" id="PRO_0000068176" description="UPF0309 protein BH0227">
    <location>
        <begin position="1"/>
        <end position="250"/>
    </location>
</feature>
<feature type="domain" description="SIS" evidence="1">
    <location>
        <begin position="31"/>
        <end position="214"/>
    </location>
</feature>
<evidence type="ECO:0000255" key="1">
    <source>
        <dbReference type="HAMAP-Rule" id="MF_01240"/>
    </source>
</evidence>
<reference key="1">
    <citation type="journal article" date="2000" name="Nucleic Acids Res.">
        <title>Complete genome sequence of the alkaliphilic bacterium Bacillus halodurans and genomic sequence comparison with Bacillus subtilis.</title>
        <authorList>
            <person name="Takami H."/>
            <person name="Nakasone K."/>
            <person name="Takaki Y."/>
            <person name="Maeno G."/>
            <person name="Sasaki R."/>
            <person name="Masui N."/>
            <person name="Fuji F."/>
            <person name="Hirama C."/>
            <person name="Nakamura Y."/>
            <person name="Ogasawara N."/>
            <person name="Kuhara S."/>
            <person name="Horikoshi K."/>
        </authorList>
    </citation>
    <scope>NUCLEOTIDE SEQUENCE [LARGE SCALE GENOMIC DNA]</scope>
    <source>
        <strain>ATCC BAA-125 / DSM 18197 / FERM 7344 / JCM 9153 / C-125</strain>
    </source>
</reference>